<protein>
    <recommendedName>
        <fullName evidence="1">Release factor glutamine methyltransferase</fullName>
        <shortName evidence="1">RF MTase</shortName>
        <ecNumber evidence="1">2.1.1.297</ecNumber>
    </recommendedName>
    <alternativeName>
        <fullName evidence="1">N5-glutamine methyltransferase PrmC</fullName>
    </alternativeName>
    <alternativeName>
        <fullName evidence="1">Protein-(glutamine-N5) MTase PrmC</fullName>
    </alternativeName>
    <alternativeName>
        <fullName evidence="1">Protein-glutamine N-methyltransferase PrmC</fullName>
    </alternativeName>
</protein>
<accession>Q5NIA7</accession>
<name>PRMC_FRATT</name>
<proteinExistence type="inferred from homology"/>
<gene>
    <name evidence="1" type="primary">prmC</name>
    <name type="ordered locus">FTT_0169</name>
</gene>
<keyword id="KW-0489">Methyltransferase</keyword>
<keyword id="KW-1185">Reference proteome</keyword>
<keyword id="KW-0949">S-adenosyl-L-methionine</keyword>
<keyword id="KW-0808">Transferase</keyword>
<reference key="1">
    <citation type="journal article" date="2005" name="Nat. Genet.">
        <title>The complete genome sequence of Francisella tularensis, the causative agent of tularemia.</title>
        <authorList>
            <person name="Larsson P."/>
            <person name="Oyston P.C.F."/>
            <person name="Chain P."/>
            <person name="Chu M.C."/>
            <person name="Duffield M."/>
            <person name="Fuxelius H.-H."/>
            <person name="Garcia E."/>
            <person name="Haelltorp G."/>
            <person name="Johansson D."/>
            <person name="Isherwood K.E."/>
            <person name="Karp P.D."/>
            <person name="Larsson E."/>
            <person name="Liu Y."/>
            <person name="Michell S."/>
            <person name="Prior J."/>
            <person name="Prior R."/>
            <person name="Malfatti S."/>
            <person name="Sjoestedt A."/>
            <person name="Svensson K."/>
            <person name="Thompson N."/>
            <person name="Vergez L."/>
            <person name="Wagg J.K."/>
            <person name="Wren B.W."/>
            <person name="Lindler L.E."/>
            <person name="Andersson S.G.E."/>
            <person name="Forsman M."/>
            <person name="Titball R.W."/>
        </authorList>
    </citation>
    <scope>NUCLEOTIDE SEQUENCE [LARGE SCALE GENOMIC DNA]</scope>
    <source>
        <strain>SCHU S4 / Schu 4</strain>
    </source>
</reference>
<dbReference type="EC" id="2.1.1.297" evidence="1"/>
<dbReference type="EMBL" id="AJ749949">
    <property type="protein sequence ID" value="CAG44802.1"/>
    <property type="molecule type" value="Genomic_DNA"/>
</dbReference>
<dbReference type="RefSeq" id="WP_003019963.1">
    <property type="nucleotide sequence ID" value="NZ_CP010290.1"/>
</dbReference>
<dbReference type="RefSeq" id="YP_169235.1">
    <property type="nucleotide sequence ID" value="NC_006570.2"/>
</dbReference>
<dbReference type="SMR" id="Q5NIA7"/>
<dbReference type="STRING" id="177416.FTT_0169"/>
<dbReference type="DNASU" id="3191135"/>
<dbReference type="EnsemblBacteria" id="CAG44802">
    <property type="protein sequence ID" value="CAG44802"/>
    <property type="gene ID" value="FTT_0169"/>
</dbReference>
<dbReference type="KEGG" id="ftu:FTT_0169"/>
<dbReference type="eggNOG" id="COG2890">
    <property type="taxonomic scope" value="Bacteria"/>
</dbReference>
<dbReference type="OrthoDB" id="9800643at2"/>
<dbReference type="Proteomes" id="UP000001174">
    <property type="component" value="Chromosome"/>
</dbReference>
<dbReference type="GO" id="GO:0003676">
    <property type="term" value="F:nucleic acid binding"/>
    <property type="evidence" value="ECO:0007669"/>
    <property type="project" value="InterPro"/>
</dbReference>
<dbReference type="GO" id="GO:0102559">
    <property type="term" value="F:protein-(glutamine-N5) methyltransferase activity"/>
    <property type="evidence" value="ECO:0007669"/>
    <property type="project" value="UniProtKB-EC"/>
</dbReference>
<dbReference type="GO" id="GO:0036009">
    <property type="term" value="F:protein-glutamine N-methyltransferase activity"/>
    <property type="evidence" value="ECO:0007669"/>
    <property type="project" value="UniProtKB-UniRule"/>
</dbReference>
<dbReference type="GO" id="GO:0032259">
    <property type="term" value="P:methylation"/>
    <property type="evidence" value="ECO:0007669"/>
    <property type="project" value="UniProtKB-KW"/>
</dbReference>
<dbReference type="CDD" id="cd02440">
    <property type="entry name" value="AdoMet_MTases"/>
    <property type="match status" value="1"/>
</dbReference>
<dbReference type="FunFam" id="3.40.50.150:FF:000053">
    <property type="entry name" value="Release factor glutamine methyltransferase"/>
    <property type="match status" value="1"/>
</dbReference>
<dbReference type="Gene3D" id="1.10.8.10">
    <property type="entry name" value="DNA helicase RuvA subunit, C-terminal domain"/>
    <property type="match status" value="1"/>
</dbReference>
<dbReference type="Gene3D" id="3.40.50.150">
    <property type="entry name" value="Vaccinia Virus protein VP39"/>
    <property type="match status" value="1"/>
</dbReference>
<dbReference type="HAMAP" id="MF_02126">
    <property type="entry name" value="RF_methyltr_PrmC"/>
    <property type="match status" value="1"/>
</dbReference>
<dbReference type="InterPro" id="IPR002052">
    <property type="entry name" value="DNA_methylase_N6_adenine_CS"/>
</dbReference>
<dbReference type="InterPro" id="IPR004556">
    <property type="entry name" value="HemK-like"/>
</dbReference>
<dbReference type="InterPro" id="IPR050320">
    <property type="entry name" value="N5-glutamine_MTase"/>
</dbReference>
<dbReference type="InterPro" id="IPR040758">
    <property type="entry name" value="PrmC_N"/>
</dbReference>
<dbReference type="InterPro" id="IPR019874">
    <property type="entry name" value="RF_methyltr_PrmC"/>
</dbReference>
<dbReference type="InterPro" id="IPR029063">
    <property type="entry name" value="SAM-dependent_MTases_sf"/>
</dbReference>
<dbReference type="InterPro" id="IPR007848">
    <property type="entry name" value="Small_mtfrase_dom"/>
</dbReference>
<dbReference type="NCBIfam" id="TIGR00536">
    <property type="entry name" value="hemK_fam"/>
    <property type="match status" value="1"/>
</dbReference>
<dbReference type="NCBIfam" id="TIGR03534">
    <property type="entry name" value="RF_mod_PrmC"/>
    <property type="match status" value="1"/>
</dbReference>
<dbReference type="PANTHER" id="PTHR18895">
    <property type="entry name" value="HEMK METHYLTRANSFERASE"/>
    <property type="match status" value="1"/>
</dbReference>
<dbReference type="PANTHER" id="PTHR18895:SF74">
    <property type="entry name" value="MTRF1L RELEASE FACTOR GLUTAMINE METHYLTRANSFERASE"/>
    <property type="match status" value="1"/>
</dbReference>
<dbReference type="Pfam" id="PF05175">
    <property type="entry name" value="MTS"/>
    <property type="match status" value="1"/>
</dbReference>
<dbReference type="Pfam" id="PF17827">
    <property type="entry name" value="PrmC_N"/>
    <property type="match status" value="1"/>
</dbReference>
<dbReference type="SUPFAM" id="SSF53335">
    <property type="entry name" value="S-adenosyl-L-methionine-dependent methyltransferases"/>
    <property type="match status" value="1"/>
</dbReference>
<feature type="chain" id="PRO_0000414522" description="Release factor glutamine methyltransferase">
    <location>
        <begin position="1"/>
        <end position="284"/>
    </location>
</feature>
<feature type="binding site" evidence="1">
    <location>
        <begin position="123"/>
        <end position="127"/>
    </location>
    <ligand>
        <name>S-adenosyl-L-methionine</name>
        <dbReference type="ChEBI" id="CHEBI:59789"/>
    </ligand>
</feature>
<feature type="binding site" evidence="1">
    <location>
        <position position="146"/>
    </location>
    <ligand>
        <name>S-adenosyl-L-methionine</name>
        <dbReference type="ChEBI" id="CHEBI:59789"/>
    </ligand>
</feature>
<feature type="binding site" evidence="1">
    <location>
        <position position="174"/>
    </location>
    <ligand>
        <name>S-adenosyl-L-methionine</name>
        <dbReference type="ChEBI" id="CHEBI:59789"/>
    </ligand>
</feature>
<feature type="binding site" evidence="1">
    <location>
        <begin position="189"/>
        <end position="192"/>
    </location>
    <ligand>
        <name>substrate</name>
    </ligand>
</feature>
<feature type="binding site" evidence="1">
    <location>
        <position position="189"/>
    </location>
    <ligand>
        <name>S-adenosyl-L-methionine</name>
        <dbReference type="ChEBI" id="CHEBI:59789"/>
    </ligand>
</feature>
<sequence>MSNITISQLLALSLAKFNQCDISTKHDLQMIICDVLGVDKTYLYINLDKQLDKNTLKKIDEKILRLLAGEPLAYILGYKYFWNQKLYVTKDTLIPRADTETVVATVLDDIQNKDAQLKILDLGTGTGAIALALAAELANSQVVAVDLYQQSLDVAKKNAQANNITNVKFIQSSWYTNLDTDKFDIIVSNPPYIDLADTNIDQSVKDYEPARALFAADNGLADIRIIISQAKDFLNLGGFIYIEHGFTQADAITALFSQCNFTDIKIVKDLNNNDRCTKAQLGYL</sequence>
<comment type="function">
    <text evidence="1">Methylates the class 1 translation termination release factors RF1/PrfA and RF2/PrfB on the glutamine residue of the universally conserved GGQ motif.</text>
</comment>
<comment type="catalytic activity">
    <reaction evidence="1">
        <text>L-glutaminyl-[peptide chain release factor] + S-adenosyl-L-methionine = N(5)-methyl-L-glutaminyl-[peptide chain release factor] + S-adenosyl-L-homocysteine + H(+)</text>
        <dbReference type="Rhea" id="RHEA:42896"/>
        <dbReference type="Rhea" id="RHEA-COMP:10271"/>
        <dbReference type="Rhea" id="RHEA-COMP:10272"/>
        <dbReference type="ChEBI" id="CHEBI:15378"/>
        <dbReference type="ChEBI" id="CHEBI:30011"/>
        <dbReference type="ChEBI" id="CHEBI:57856"/>
        <dbReference type="ChEBI" id="CHEBI:59789"/>
        <dbReference type="ChEBI" id="CHEBI:61891"/>
        <dbReference type="EC" id="2.1.1.297"/>
    </reaction>
</comment>
<comment type="similarity">
    <text evidence="1">Belongs to the protein N5-glutamine methyltransferase family. PrmC subfamily.</text>
</comment>
<evidence type="ECO:0000255" key="1">
    <source>
        <dbReference type="HAMAP-Rule" id="MF_02126"/>
    </source>
</evidence>
<organism>
    <name type="scientific">Francisella tularensis subsp. tularensis (strain SCHU S4 / Schu 4)</name>
    <dbReference type="NCBI Taxonomy" id="177416"/>
    <lineage>
        <taxon>Bacteria</taxon>
        <taxon>Pseudomonadati</taxon>
        <taxon>Pseudomonadota</taxon>
        <taxon>Gammaproteobacteria</taxon>
        <taxon>Thiotrichales</taxon>
        <taxon>Francisellaceae</taxon>
        <taxon>Francisella</taxon>
    </lineage>
</organism>